<gene>
    <name type="primary">iml1</name>
    <name type="ORF">SPBC26H8.04c</name>
</gene>
<comment type="subcellular location">
    <subcellularLocation>
        <location evidence="1">Vacuole membrane</location>
        <topology evidence="1">Peripheral membrane protein</topology>
    </subcellularLocation>
</comment>
<comment type="similarity">
    <text evidence="4">Belongs to the IML1 family.</text>
</comment>
<protein>
    <recommendedName>
        <fullName>Vacuolar membrane-associated protein iml1</fullName>
    </recommendedName>
</protein>
<keyword id="KW-0472">Membrane</keyword>
<keyword id="KW-0597">Phosphoprotein</keyword>
<keyword id="KW-1185">Reference proteome</keyword>
<keyword id="KW-0926">Vacuole</keyword>
<evidence type="ECO:0000250" key="1"/>
<evidence type="ECO:0000255" key="2">
    <source>
        <dbReference type="PROSITE-ProRule" id="PRU00066"/>
    </source>
</evidence>
<evidence type="ECO:0000269" key="3">
    <source>
    </source>
</evidence>
<evidence type="ECO:0000305" key="4"/>
<feature type="chain" id="PRO_0000301778" description="Vacuolar membrane-associated protein iml1">
    <location>
        <begin position="1"/>
        <end position="1496"/>
    </location>
</feature>
<feature type="domain" description="DEP" evidence="2">
    <location>
        <begin position="1116"/>
        <end position="1191"/>
    </location>
</feature>
<feature type="modified residue" description="Phosphoserine" evidence="3">
    <location>
        <position position="738"/>
    </location>
</feature>
<name>IML1_SCHPO</name>
<accession>O74788</accession>
<sequence length="1496" mass="169995">MAITLNLWTHESSLFPNDAVLNYDLVPSAKPGDIFEIRAQNGDEIALQHNHSSTGKLHAKREKEPVYLMPSPLTDDLKRRHPNLQLSVVSHISSLLNIKNREPVVVKICEDKTNLEAEHVVIFFRDQFISRSDMWKLFRELCGKCVYLKQRVSFIGDVPGEIRCIWRKGKKCHSAYISERTKPIFRSESARFLIFIQMSEEMWHFEEDGELNYNKAIDGFLPDLFSFWRDLGTHHLVSIILFTRVEYSHHGPMCVWQPRSQKNSEKGSSIYPQNSFNASIDNEGGPYEDFFKVVVDNVSSRDWQPVLANLKLELAKFRQDVIVRKIKDENGREIEYICGRMTGSQEGNFLEVINMAVFQFQSDYIDRDLSRTGTSIIIVTPGTGLYEVNEKMLHLTSKSLLNTVVGMDIVSLGKVPLFLTPIVRYKNPVKNKKRSQLTSRISSSVSPSNVIPNSLTSSVSNFSVSSFLNNLKEDTEWLYTFPIGCNISFYSTTEMRSLRSPWENLMREHQFEPTAKMHELQMMGVLEAESAKISIPLLQSDPLLKGSVFSEEVQEDYDERQFTGEAAVSANDVLSSSSPRHFSSHTPVNVDKSSYLEMNGHSLSTVISGKESISSFGAKVDDLKSTSKESARQFGKSALTERLQKLAGNSSNVSSSLQTSSSNKSSLLTKKSSFPALLKGFLALPATVTTSANPLGFKSTIQRPIPIKNNEDSDSCKAFSQAPPIATKKPPTFLKPNSPEYAKTVIPKSSTNLENEYQTPWKIIQNPFKLKETTADNDPVSLRWEHLYMKVQDVRKFNWLSMCTPGALPLTFSYFPSEEELNDKFEEYTYTIGIDPEFTQMNQQELLAEMICQRLSRGYQIVVNPAAAVSYSGNPKANKAGTITDFSRSVNNQRNGHLTVGSDAVCLSLGDSQFHRLSCDSVGYNIEVKRYVKKVSGQGKMRYDYNFWSKNECKYVKSNITFSANDSANYNWNYVDQLICGFETYLPDSVKYWRARFVLLPMSTTSTHVFQKYQLLDHADALSDEEFRVEGIYKLSELLYKGKIDPMNDSNNKTPNTSPAELLGIKFTTLPMAQYIHSELEALRLDSSRNEQSLFMPNKRLDCSADLHTIAKEIQGPGGPKIDDITWHYRIYENCFLGSEFVSWLANTFIGINTREEALKYGNKLLSLGLFDHALKKHPLLDGYYVYRISPDYSIKPVSNRPYRSWFSRKKDSGQKHLDNKIITESEAGPSRLELSRRILFNADVEKKNGKSETVTVHYDLLHNPASCYHIRIEWLLATASVIEKLLQSWSRILERYGLKLVEAPIHEIAAVGELNPFDQVSIISLALDPPPIPERAPLVNDPVNYSKNWWNVKILEHFDFILDTEAASTFPKSITAVYSWGKPNFRYVQYIHRTGTVLVQIDDDQRFLWLPNRLHNSKVSKLSFTKSNKSTLNPNLKETAEELERKFREFCSNKDELDQFYGIVNHASDDRRSIYSSASTHASNASADDASNVNV</sequence>
<organism>
    <name type="scientific">Schizosaccharomyces pombe (strain 972 / ATCC 24843)</name>
    <name type="common">Fission yeast</name>
    <dbReference type="NCBI Taxonomy" id="284812"/>
    <lineage>
        <taxon>Eukaryota</taxon>
        <taxon>Fungi</taxon>
        <taxon>Dikarya</taxon>
        <taxon>Ascomycota</taxon>
        <taxon>Taphrinomycotina</taxon>
        <taxon>Schizosaccharomycetes</taxon>
        <taxon>Schizosaccharomycetales</taxon>
        <taxon>Schizosaccharomycetaceae</taxon>
        <taxon>Schizosaccharomyces</taxon>
    </lineage>
</organism>
<reference key="1">
    <citation type="journal article" date="2002" name="Nature">
        <title>The genome sequence of Schizosaccharomyces pombe.</title>
        <authorList>
            <person name="Wood V."/>
            <person name="Gwilliam R."/>
            <person name="Rajandream M.A."/>
            <person name="Lyne M.H."/>
            <person name="Lyne R."/>
            <person name="Stewart A."/>
            <person name="Sgouros J.G."/>
            <person name="Peat N."/>
            <person name="Hayles J."/>
            <person name="Baker S.G."/>
            <person name="Basham D."/>
            <person name="Bowman S."/>
            <person name="Brooks K."/>
            <person name="Brown D."/>
            <person name="Brown S."/>
            <person name="Chillingworth T."/>
            <person name="Churcher C.M."/>
            <person name="Collins M."/>
            <person name="Connor R."/>
            <person name="Cronin A."/>
            <person name="Davis P."/>
            <person name="Feltwell T."/>
            <person name="Fraser A."/>
            <person name="Gentles S."/>
            <person name="Goble A."/>
            <person name="Hamlin N."/>
            <person name="Harris D.E."/>
            <person name="Hidalgo J."/>
            <person name="Hodgson G."/>
            <person name="Holroyd S."/>
            <person name="Hornsby T."/>
            <person name="Howarth S."/>
            <person name="Huckle E.J."/>
            <person name="Hunt S."/>
            <person name="Jagels K."/>
            <person name="James K.D."/>
            <person name="Jones L."/>
            <person name="Jones M."/>
            <person name="Leather S."/>
            <person name="McDonald S."/>
            <person name="McLean J."/>
            <person name="Mooney P."/>
            <person name="Moule S."/>
            <person name="Mungall K.L."/>
            <person name="Murphy L.D."/>
            <person name="Niblett D."/>
            <person name="Odell C."/>
            <person name="Oliver K."/>
            <person name="O'Neil S."/>
            <person name="Pearson D."/>
            <person name="Quail M.A."/>
            <person name="Rabbinowitsch E."/>
            <person name="Rutherford K.M."/>
            <person name="Rutter S."/>
            <person name="Saunders D."/>
            <person name="Seeger K."/>
            <person name="Sharp S."/>
            <person name="Skelton J."/>
            <person name="Simmonds M.N."/>
            <person name="Squares R."/>
            <person name="Squares S."/>
            <person name="Stevens K."/>
            <person name="Taylor K."/>
            <person name="Taylor R.G."/>
            <person name="Tivey A."/>
            <person name="Walsh S.V."/>
            <person name="Warren T."/>
            <person name="Whitehead S."/>
            <person name="Woodward J.R."/>
            <person name="Volckaert G."/>
            <person name="Aert R."/>
            <person name="Robben J."/>
            <person name="Grymonprez B."/>
            <person name="Weltjens I."/>
            <person name="Vanstreels E."/>
            <person name="Rieger M."/>
            <person name="Schaefer M."/>
            <person name="Mueller-Auer S."/>
            <person name="Gabel C."/>
            <person name="Fuchs M."/>
            <person name="Duesterhoeft A."/>
            <person name="Fritzc C."/>
            <person name="Holzer E."/>
            <person name="Moestl D."/>
            <person name="Hilbert H."/>
            <person name="Borzym K."/>
            <person name="Langer I."/>
            <person name="Beck A."/>
            <person name="Lehrach H."/>
            <person name="Reinhardt R."/>
            <person name="Pohl T.M."/>
            <person name="Eger P."/>
            <person name="Zimmermann W."/>
            <person name="Wedler H."/>
            <person name="Wambutt R."/>
            <person name="Purnelle B."/>
            <person name="Goffeau A."/>
            <person name="Cadieu E."/>
            <person name="Dreano S."/>
            <person name="Gloux S."/>
            <person name="Lelaure V."/>
            <person name="Mottier S."/>
            <person name="Galibert F."/>
            <person name="Aves S.J."/>
            <person name="Xiang Z."/>
            <person name="Hunt C."/>
            <person name="Moore K."/>
            <person name="Hurst S.M."/>
            <person name="Lucas M."/>
            <person name="Rochet M."/>
            <person name="Gaillardin C."/>
            <person name="Tallada V.A."/>
            <person name="Garzon A."/>
            <person name="Thode G."/>
            <person name="Daga R.R."/>
            <person name="Cruzado L."/>
            <person name="Jimenez J."/>
            <person name="Sanchez M."/>
            <person name="del Rey F."/>
            <person name="Benito J."/>
            <person name="Dominguez A."/>
            <person name="Revuelta J.L."/>
            <person name="Moreno S."/>
            <person name="Armstrong J."/>
            <person name="Forsburg S.L."/>
            <person name="Cerutti L."/>
            <person name="Lowe T."/>
            <person name="McCombie W.R."/>
            <person name="Paulsen I."/>
            <person name="Potashkin J."/>
            <person name="Shpakovski G.V."/>
            <person name="Ussery D."/>
            <person name="Barrell B.G."/>
            <person name="Nurse P."/>
        </authorList>
    </citation>
    <scope>NUCLEOTIDE SEQUENCE [LARGE SCALE GENOMIC DNA]</scope>
    <source>
        <strain>972 / ATCC 24843</strain>
    </source>
</reference>
<reference key="2">
    <citation type="journal article" date="2008" name="J. Proteome Res.">
        <title>Phosphoproteome analysis of fission yeast.</title>
        <authorList>
            <person name="Wilson-Grady J.T."/>
            <person name="Villen J."/>
            <person name="Gygi S.P."/>
        </authorList>
    </citation>
    <scope>PHOSPHORYLATION [LARGE SCALE ANALYSIS] AT SER-738</scope>
    <scope>IDENTIFICATION BY MASS SPECTROMETRY</scope>
</reference>
<dbReference type="EMBL" id="CU329671">
    <property type="protein sequence ID" value="CAA21096.1"/>
    <property type="molecule type" value="Genomic_DNA"/>
</dbReference>
<dbReference type="PIR" id="T40016">
    <property type="entry name" value="T40016"/>
</dbReference>
<dbReference type="RefSeq" id="NP_596645.1">
    <property type="nucleotide sequence ID" value="NM_001022567.2"/>
</dbReference>
<dbReference type="SMR" id="O74788"/>
<dbReference type="BioGRID" id="277086">
    <property type="interactions" value="15"/>
</dbReference>
<dbReference type="FunCoup" id="O74788">
    <property type="interactions" value="242"/>
</dbReference>
<dbReference type="STRING" id="284812.O74788"/>
<dbReference type="iPTMnet" id="O74788"/>
<dbReference type="PaxDb" id="4896-SPBC26H8.04c.1"/>
<dbReference type="EnsemblFungi" id="SPBC26H8.04c.1">
    <property type="protein sequence ID" value="SPBC26H8.04c.1:pep"/>
    <property type="gene ID" value="SPBC26H8.04c"/>
</dbReference>
<dbReference type="GeneID" id="2540559"/>
<dbReference type="KEGG" id="spo:2540559"/>
<dbReference type="PomBase" id="SPBC26H8.04c">
    <property type="gene designation" value="iml1"/>
</dbReference>
<dbReference type="VEuPathDB" id="FungiDB:SPBC26H8.04c"/>
<dbReference type="eggNOG" id="KOG3572">
    <property type="taxonomic scope" value="Eukaryota"/>
</dbReference>
<dbReference type="HOGENOM" id="CLU_000935_1_1_1"/>
<dbReference type="InParanoid" id="O74788"/>
<dbReference type="OMA" id="SWMNATP"/>
<dbReference type="PhylomeDB" id="O74788"/>
<dbReference type="PRO" id="PR:O74788"/>
<dbReference type="Proteomes" id="UP000002485">
    <property type="component" value="Chromosome II"/>
</dbReference>
<dbReference type="GO" id="GO:0000329">
    <property type="term" value="C:fungal-type vacuole membrane"/>
    <property type="evidence" value="ECO:0000314"/>
    <property type="project" value="PomBase"/>
</dbReference>
<dbReference type="GO" id="GO:1990130">
    <property type="term" value="C:GATOR1 complex"/>
    <property type="evidence" value="ECO:0000353"/>
    <property type="project" value="PomBase"/>
</dbReference>
<dbReference type="GO" id="GO:0005774">
    <property type="term" value="C:vacuolar membrane"/>
    <property type="evidence" value="ECO:0000269"/>
    <property type="project" value="PomBase"/>
</dbReference>
<dbReference type="GO" id="GO:0005096">
    <property type="term" value="F:GTPase activator activity"/>
    <property type="evidence" value="ECO:0000315"/>
    <property type="project" value="PomBase"/>
</dbReference>
<dbReference type="GO" id="GO:0035556">
    <property type="term" value="P:intracellular signal transduction"/>
    <property type="evidence" value="ECO:0007669"/>
    <property type="project" value="InterPro"/>
</dbReference>
<dbReference type="GO" id="GO:1904262">
    <property type="term" value="P:negative regulation of TORC1 signaling"/>
    <property type="evidence" value="ECO:0000315"/>
    <property type="project" value="PomBase"/>
</dbReference>
<dbReference type="GO" id="GO:0010508">
    <property type="term" value="P:positive regulation of autophagy"/>
    <property type="evidence" value="ECO:0000315"/>
    <property type="project" value="PomBase"/>
</dbReference>
<dbReference type="CDD" id="cd04449">
    <property type="entry name" value="DEP_DEPDC5-like"/>
    <property type="match status" value="1"/>
</dbReference>
<dbReference type="Gene3D" id="1.10.10.10">
    <property type="entry name" value="Winged helix-like DNA-binding domain superfamily/Winged helix DNA-binding domain"/>
    <property type="match status" value="1"/>
</dbReference>
<dbReference type="InterPro" id="IPR000591">
    <property type="entry name" value="DEP_dom"/>
</dbReference>
<dbReference type="InterPro" id="IPR045838">
    <property type="entry name" value="DEPDC5_CTD"/>
</dbReference>
<dbReference type="InterPro" id="IPR027244">
    <property type="entry name" value="IML1"/>
</dbReference>
<dbReference type="InterPro" id="IPR048255">
    <property type="entry name" value="IML1_N"/>
</dbReference>
<dbReference type="InterPro" id="IPR036388">
    <property type="entry name" value="WH-like_DNA-bd_sf"/>
</dbReference>
<dbReference type="InterPro" id="IPR036390">
    <property type="entry name" value="WH_DNA-bd_sf"/>
</dbReference>
<dbReference type="PANTHER" id="PTHR13179">
    <property type="entry name" value="DEP DOMAIN CONTAINING PROTEIN 5"/>
    <property type="match status" value="1"/>
</dbReference>
<dbReference type="PANTHER" id="PTHR13179:SF8">
    <property type="entry name" value="GATOR COMPLEX PROTEIN DEPDC5"/>
    <property type="match status" value="1"/>
</dbReference>
<dbReference type="Pfam" id="PF00610">
    <property type="entry name" value="DEP"/>
    <property type="match status" value="1"/>
</dbReference>
<dbReference type="Pfam" id="PF19418">
    <property type="entry name" value="DEPDC5_CTD"/>
    <property type="match status" value="1"/>
</dbReference>
<dbReference type="Pfam" id="PF12257">
    <property type="entry name" value="IML1"/>
    <property type="match status" value="1"/>
</dbReference>
<dbReference type="Pfam" id="PF24438">
    <property type="entry name" value="IML1_N_fung"/>
    <property type="match status" value="1"/>
</dbReference>
<dbReference type="SMART" id="SM00049">
    <property type="entry name" value="DEP"/>
    <property type="match status" value="1"/>
</dbReference>
<dbReference type="SUPFAM" id="SSF46785">
    <property type="entry name" value="Winged helix' DNA-binding domain"/>
    <property type="match status" value="1"/>
</dbReference>
<dbReference type="PROSITE" id="PS50186">
    <property type="entry name" value="DEP"/>
    <property type="match status" value="1"/>
</dbReference>
<proteinExistence type="evidence at protein level"/>